<gene>
    <name type="ordered locus">Ajs_1798</name>
</gene>
<feature type="chain" id="PRO_1000045010" description="Probable Fe(2+)-trafficking protein">
    <location>
        <begin position="1"/>
        <end position="90"/>
    </location>
</feature>
<name>FETP_ACISJ</name>
<accession>A1W6W1</accession>
<organism>
    <name type="scientific">Acidovorax sp. (strain JS42)</name>
    <dbReference type="NCBI Taxonomy" id="232721"/>
    <lineage>
        <taxon>Bacteria</taxon>
        <taxon>Pseudomonadati</taxon>
        <taxon>Pseudomonadota</taxon>
        <taxon>Betaproteobacteria</taxon>
        <taxon>Burkholderiales</taxon>
        <taxon>Comamonadaceae</taxon>
        <taxon>Acidovorax</taxon>
    </lineage>
</organism>
<proteinExistence type="inferred from homology"/>
<protein>
    <recommendedName>
        <fullName evidence="1">Probable Fe(2+)-trafficking protein</fullName>
    </recommendedName>
</protein>
<evidence type="ECO:0000255" key="1">
    <source>
        <dbReference type="HAMAP-Rule" id="MF_00686"/>
    </source>
</evidence>
<reference key="1">
    <citation type="submission" date="2006-12" db="EMBL/GenBank/DDBJ databases">
        <title>Complete sequence of chromosome 1 of Acidovorax sp. JS42.</title>
        <authorList>
            <person name="Copeland A."/>
            <person name="Lucas S."/>
            <person name="Lapidus A."/>
            <person name="Barry K."/>
            <person name="Detter J.C."/>
            <person name="Glavina del Rio T."/>
            <person name="Dalin E."/>
            <person name="Tice H."/>
            <person name="Pitluck S."/>
            <person name="Chertkov O."/>
            <person name="Brettin T."/>
            <person name="Bruce D."/>
            <person name="Han C."/>
            <person name="Tapia R."/>
            <person name="Gilna P."/>
            <person name="Schmutz J."/>
            <person name="Larimer F."/>
            <person name="Land M."/>
            <person name="Hauser L."/>
            <person name="Kyrpides N."/>
            <person name="Kim E."/>
            <person name="Stahl D."/>
            <person name="Richardson P."/>
        </authorList>
    </citation>
    <scope>NUCLEOTIDE SEQUENCE [LARGE SCALE GENOMIC DNA]</scope>
    <source>
        <strain>JS42</strain>
    </source>
</reference>
<sequence>MARTVHCIKLGKEAEGLDFAPYPGDLGKRIYDNVSKQAWADWIKHQTMLVNENRLNLADARARQYLARQMENHFFGSGADAAAGYVPPSA</sequence>
<comment type="function">
    <text evidence="1">Could be a mediator in iron transactions between iron acquisition and iron-requiring processes, such as synthesis and/or repair of Fe-S clusters in biosynthetic enzymes.</text>
</comment>
<comment type="similarity">
    <text evidence="1">Belongs to the Fe(2+)-trafficking protein family.</text>
</comment>
<keyword id="KW-0408">Iron</keyword>
<dbReference type="EMBL" id="CP000539">
    <property type="protein sequence ID" value="ABM41986.1"/>
    <property type="molecule type" value="Genomic_DNA"/>
</dbReference>
<dbReference type="SMR" id="A1W6W1"/>
<dbReference type="STRING" id="232721.Ajs_1798"/>
<dbReference type="KEGG" id="ajs:Ajs_1798"/>
<dbReference type="eggNOG" id="COG2924">
    <property type="taxonomic scope" value="Bacteria"/>
</dbReference>
<dbReference type="HOGENOM" id="CLU_170994_0_0_4"/>
<dbReference type="Proteomes" id="UP000000645">
    <property type="component" value="Chromosome"/>
</dbReference>
<dbReference type="GO" id="GO:0005829">
    <property type="term" value="C:cytosol"/>
    <property type="evidence" value="ECO:0007669"/>
    <property type="project" value="TreeGrafter"/>
</dbReference>
<dbReference type="GO" id="GO:0005506">
    <property type="term" value="F:iron ion binding"/>
    <property type="evidence" value="ECO:0007669"/>
    <property type="project" value="UniProtKB-UniRule"/>
</dbReference>
<dbReference type="GO" id="GO:0034599">
    <property type="term" value="P:cellular response to oxidative stress"/>
    <property type="evidence" value="ECO:0007669"/>
    <property type="project" value="TreeGrafter"/>
</dbReference>
<dbReference type="FunFam" id="1.10.3880.10:FF:000001">
    <property type="entry name" value="Probable Fe(2+)-trafficking protein"/>
    <property type="match status" value="1"/>
</dbReference>
<dbReference type="Gene3D" id="1.10.3880.10">
    <property type="entry name" value="Fe(II) trafficking protein YggX"/>
    <property type="match status" value="1"/>
</dbReference>
<dbReference type="HAMAP" id="MF_00686">
    <property type="entry name" value="Fe_traffic_YggX"/>
    <property type="match status" value="1"/>
</dbReference>
<dbReference type="InterPro" id="IPR007457">
    <property type="entry name" value="Fe_traffick_prot_YggX"/>
</dbReference>
<dbReference type="InterPro" id="IPR036766">
    <property type="entry name" value="Fe_traffick_prot_YggX_sf"/>
</dbReference>
<dbReference type="NCBIfam" id="NF003817">
    <property type="entry name" value="PRK05408.1"/>
    <property type="match status" value="1"/>
</dbReference>
<dbReference type="PANTHER" id="PTHR36965">
    <property type="entry name" value="FE(2+)-TRAFFICKING PROTEIN-RELATED"/>
    <property type="match status" value="1"/>
</dbReference>
<dbReference type="PANTHER" id="PTHR36965:SF1">
    <property type="entry name" value="FE(2+)-TRAFFICKING PROTEIN-RELATED"/>
    <property type="match status" value="1"/>
</dbReference>
<dbReference type="Pfam" id="PF04362">
    <property type="entry name" value="Iron_traffic"/>
    <property type="match status" value="1"/>
</dbReference>
<dbReference type="PIRSF" id="PIRSF029827">
    <property type="entry name" value="Fe_traffic_YggX"/>
    <property type="match status" value="1"/>
</dbReference>
<dbReference type="SUPFAM" id="SSF111148">
    <property type="entry name" value="YggX-like"/>
    <property type="match status" value="1"/>
</dbReference>